<gene>
    <name type="primary">rrt2</name>
    <name type="ORF">SPCC18.15</name>
</gene>
<name>DPH7_SCHPO</name>
<comment type="function">
    <text evidence="1">Catalyzes the demethylation of diphthine methyl ester to form diphthine, an intermediate in diphthamide biosynthesis, a post-translational modification of histidine which occurs in translation elongation factor 2 (eft201 and eft202).</text>
</comment>
<comment type="catalytic activity">
    <reaction evidence="1">
        <text>diphthine methyl ester-[translation elongation factor 2] + H2O = diphthine-[translation elongation factor 2] + methanol + H(+)</text>
        <dbReference type="Rhea" id="RHEA:42656"/>
        <dbReference type="Rhea" id="RHEA-COMP:10172"/>
        <dbReference type="Rhea" id="RHEA-COMP:10173"/>
        <dbReference type="ChEBI" id="CHEBI:15377"/>
        <dbReference type="ChEBI" id="CHEBI:15378"/>
        <dbReference type="ChEBI" id="CHEBI:17790"/>
        <dbReference type="ChEBI" id="CHEBI:79005"/>
        <dbReference type="ChEBI" id="CHEBI:82696"/>
        <dbReference type="EC" id="3.1.1.97"/>
    </reaction>
</comment>
<comment type="pathway">
    <text>Protein modification; peptidyl-diphthamide biosynthesis.</text>
</comment>
<comment type="subcellular location">
    <subcellularLocation>
        <location evidence="2">Cytoplasm</location>
    </subcellularLocation>
    <subcellularLocation>
        <location evidence="2">Nucleus</location>
    </subcellularLocation>
</comment>
<comment type="similarity">
    <text evidence="3">Belongs to the DPH7 family.</text>
</comment>
<evidence type="ECO:0000250" key="1">
    <source>
        <dbReference type="UniProtKB" id="P38332"/>
    </source>
</evidence>
<evidence type="ECO:0000269" key="2">
    <source>
    </source>
</evidence>
<evidence type="ECO:0000305" key="3"/>
<sequence>MSETGIIPKSTDYTDWPADVCKYSQVFEDVLVVGTYMLDESTKLRHGKLVLYDTKEDVLKRVFDMHCDAILDFKWSPHDASVLAVAHSTGHVSFYRHQFRAELMFLRGIKVADSSVLMLSLDFSDSGKELAVSMSNGSVLIIDIDSGVIKNKWKEHDYEAWTCHYSRQDNNLLYSGGDDAALVCYDQRIPNSCIWRDIQVHHSGVVSILSRAPFGPYIATGEYGDFMHTLDTRNIGKPLFSANLGGGVWRLEHMETTENYHKVLGILMHRGAQVLRISNDFSSIDASKRIFKEHESMCYGGDWRHTDGLLATCSFYDKRVCLWEDI</sequence>
<feature type="chain" id="PRO_0000372416" description="Diphthine methyltransferase">
    <location>
        <begin position="1"/>
        <end position="326"/>
    </location>
</feature>
<feature type="repeat" description="WD 1">
    <location>
        <begin position="65"/>
        <end position="105"/>
    </location>
</feature>
<feature type="repeat" description="WD 2">
    <location>
        <begin position="113"/>
        <end position="152"/>
    </location>
</feature>
<feature type="repeat" description="WD 3">
    <location>
        <begin position="155"/>
        <end position="195"/>
    </location>
</feature>
<feature type="repeat" description="WD 4">
    <location>
        <begin position="293"/>
        <end position="326"/>
    </location>
</feature>
<reference key="1">
    <citation type="journal article" date="2002" name="Nature">
        <title>The genome sequence of Schizosaccharomyces pombe.</title>
        <authorList>
            <person name="Wood V."/>
            <person name="Gwilliam R."/>
            <person name="Rajandream M.A."/>
            <person name="Lyne M.H."/>
            <person name="Lyne R."/>
            <person name="Stewart A."/>
            <person name="Sgouros J.G."/>
            <person name="Peat N."/>
            <person name="Hayles J."/>
            <person name="Baker S.G."/>
            <person name="Basham D."/>
            <person name="Bowman S."/>
            <person name="Brooks K."/>
            <person name="Brown D."/>
            <person name="Brown S."/>
            <person name="Chillingworth T."/>
            <person name="Churcher C.M."/>
            <person name="Collins M."/>
            <person name="Connor R."/>
            <person name="Cronin A."/>
            <person name="Davis P."/>
            <person name="Feltwell T."/>
            <person name="Fraser A."/>
            <person name="Gentles S."/>
            <person name="Goble A."/>
            <person name="Hamlin N."/>
            <person name="Harris D.E."/>
            <person name="Hidalgo J."/>
            <person name="Hodgson G."/>
            <person name="Holroyd S."/>
            <person name="Hornsby T."/>
            <person name="Howarth S."/>
            <person name="Huckle E.J."/>
            <person name="Hunt S."/>
            <person name="Jagels K."/>
            <person name="James K.D."/>
            <person name="Jones L."/>
            <person name="Jones M."/>
            <person name="Leather S."/>
            <person name="McDonald S."/>
            <person name="McLean J."/>
            <person name="Mooney P."/>
            <person name="Moule S."/>
            <person name="Mungall K.L."/>
            <person name="Murphy L.D."/>
            <person name="Niblett D."/>
            <person name="Odell C."/>
            <person name="Oliver K."/>
            <person name="O'Neil S."/>
            <person name="Pearson D."/>
            <person name="Quail M.A."/>
            <person name="Rabbinowitsch E."/>
            <person name="Rutherford K.M."/>
            <person name="Rutter S."/>
            <person name="Saunders D."/>
            <person name="Seeger K."/>
            <person name="Sharp S."/>
            <person name="Skelton J."/>
            <person name="Simmonds M.N."/>
            <person name="Squares R."/>
            <person name="Squares S."/>
            <person name="Stevens K."/>
            <person name="Taylor K."/>
            <person name="Taylor R.G."/>
            <person name="Tivey A."/>
            <person name="Walsh S.V."/>
            <person name="Warren T."/>
            <person name="Whitehead S."/>
            <person name="Woodward J.R."/>
            <person name="Volckaert G."/>
            <person name="Aert R."/>
            <person name="Robben J."/>
            <person name="Grymonprez B."/>
            <person name="Weltjens I."/>
            <person name="Vanstreels E."/>
            <person name="Rieger M."/>
            <person name="Schaefer M."/>
            <person name="Mueller-Auer S."/>
            <person name="Gabel C."/>
            <person name="Fuchs M."/>
            <person name="Duesterhoeft A."/>
            <person name="Fritzc C."/>
            <person name="Holzer E."/>
            <person name="Moestl D."/>
            <person name="Hilbert H."/>
            <person name="Borzym K."/>
            <person name="Langer I."/>
            <person name="Beck A."/>
            <person name="Lehrach H."/>
            <person name="Reinhardt R."/>
            <person name="Pohl T.M."/>
            <person name="Eger P."/>
            <person name="Zimmermann W."/>
            <person name="Wedler H."/>
            <person name="Wambutt R."/>
            <person name="Purnelle B."/>
            <person name="Goffeau A."/>
            <person name="Cadieu E."/>
            <person name="Dreano S."/>
            <person name="Gloux S."/>
            <person name="Lelaure V."/>
            <person name="Mottier S."/>
            <person name="Galibert F."/>
            <person name="Aves S.J."/>
            <person name="Xiang Z."/>
            <person name="Hunt C."/>
            <person name="Moore K."/>
            <person name="Hurst S.M."/>
            <person name="Lucas M."/>
            <person name="Rochet M."/>
            <person name="Gaillardin C."/>
            <person name="Tallada V.A."/>
            <person name="Garzon A."/>
            <person name="Thode G."/>
            <person name="Daga R.R."/>
            <person name="Cruzado L."/>
            <person name="Jimenez J."/>
            <person name="Sanchez M."/>
            <person name="del Rey F."/>
            <person name="Benito J."/>
            <person name="Dominguez A."/>
            <person name="Revuelta J.L."/>
            <person name="Moreno S."/>
            <person name="Armstrong J."/>
            <person name="Forsburg S.L."/>
            <person name="Cerutti L."/>
            <person name="Lowe T."/>
            <person name="McCombie W.R."/>
            <person name="Paulsen I."/>
            <person name="Potashkin J."/>
            <person name="Shpakovski G.V."/>
            <person name="Ussery D."/>
            <person name="Barrell B.G."/>
            <person name="Nurse P."/>
        </authorList>
    </citation>
    <scope>NUCLEOTIDE SEQUENCE [LARGE SCALE GENOMIC DNA]</scope>
    <source>
        <strain>972 / ATCC 24843</strain>
    </source>
</reference>
<reference key="2">
    <citation type="journal article" date="2011" name="Science">
        <title>Comparative functional genomics of the fission yeasts.</title>
        <authorList>
            <person name="Rhind N."/>
            <person name="Chen Z."/>
            <person name="Yassour M."/>
            <person name="Thompson D.A."/>
            <person name="Haas B.J."/>
            <person name="Habib N."/>
            <person name="Wapinski I."/>
            <person name="Roy S."/>
            <person name="Lin M.F."/>
            <person name="Heiman D.I."/>
            <person name="Young S.K."/>
            <person name="Furuya K."/>
            <person name="Guo Y."/>
            <person name="Pidoux A."/>
            <person name="Chen H.M."/>
            <person name="Robbertse B."/>
            <person name="Goldberg J.M."/>
            <person name="Aoki K."/>
            <person name="Bayne E.H."/>
            <person name="Berlin A.M."/>
            <person name="Desjardins C.A."/>
            <person name="Dobbs E."/>
            <person name="Dukaj L."/>
            <person name="Fan L."/>
            <person name="FitzGerald M.G."/>
            <person name="French C."/>
            <person name="Gujja S."/>
            <person name="Hansen K."/>
            <person name="Keifenheim D."/>
            <person name="Levin J.Z."/>
            <person name="Mosher R.A."/>
            <person name="Mueller C.A."/>
            <person name="Pfiffner J."/>
            <person name="Priest M."/>
            <person name="Russ C."/>
            <person name="Smialowska A."/>
            <person name="Swoboda P."/>
            <person name="Sykes S.M."/>
            <person name="Vaughn M."/>
            <person name="Vengrova S."/>
            <person name="Yoder R."/>
            <person name="Zeng Q."/>
            <person name="Allshire R."/>
            <person name="Baulcombe D."/>
            <person name="Birren B.W."/>
            <person name="Brown W."/>
            <person name="Ekwall K."/>
            <person name="Kellis M."/>
            <person name="Leatherwood J."/>
            <person name="Levin H."/>
            <person name="Margalit H."/>
            <person name="Martienssen R."/>
            <person name="Nieduszynski C.A."/>
            <person name="Spatafora J.W."/>
            <person name="Friedman N."/>
            <person name="Dalgaard J.Z."/>
            <person name="Baumann P."/>
            <person name="Niki H."/>
            <person name="Regev A."/>
            <person name="Nusbaum C."/>
        </authorList>
    </citation>
    <scope>REVISION OF GENE MODEL</scope>
</reference>
<reference key="3">
    <citation type="journal article" date="2006" name="Nat. Biotechnol.">
        <title>ORFeome cloning and global analysis of protein localization in the fission yeast Schizosaccharomyces pombe.</title>
        <authorList>
            <person name="Matsuyama A."/>
            <person name="Arai R."/>
            <person name="Yashiroda Y."/>
            <person name="Shirai A."/>
            <person name="Kamata A."/>
            <person name="Sekido S."/>
            <person name="Kobayashi Y."/>
            <person name="Hashimoto A."/>
            <person name="Hamamoto M."/>
            <person name="Hiraoka Y."/>
            <person name="Horinouchi S."/>
            <person name="Yoshida M."/>
        </authorList>
    </citation>
    <scope>SUBCELLULAR LOCATION [LARGE SCALE ANALYSIS]</scope>
</reference>
<keyword id="KW-0963">Cytoplasm</keyword>
<keyword id="KW-0378">Hydrolase</keyword>
<keyword id="KW-0539">Nucleus</keyword>
<keyword id="KW-1185">Reference proteome</keyword>
<keyword id="KW-0677">Repeat</keyword>
<keyword id="KW-0853">WD repeat</keyword>
<proteinExistence type="inferred from homology"/>
<dbReference type="EC" id="3.1.1.97"/>
<dbReference type="EMBL" id="CU329672">
    <property type="protein sequence ID" value="CAA21429.2"/>
    <property type="molecule type" value="Genomic_DNA"/>
</dbReference>
<dbReference type="PIR" id="T41158">
    <property type="entry name" value="T41158"/>
</dbReference>
<dbReference type="RefSeq" id="NP_588394.2">
    <property type="nucleotide sequence ID" value="NM_001023385.2"/>
</dbReference>
<dbReference type="SMR" id="O74865"/>
<dbReference type="FunCoup" id="O74865">
    <property type="interactions" value="1115"/>
</dbReference>
<dbReference type="STRING" id="284812.O74865"/>
<dbReference type="iPTMnet" id="O74865"/>
<dbReference type="PaxDb" id="4896-SPCC18.15.1"/>
<dbReference type="EnsemblFungi" id="SPCC18.15.1">
    <property type="protein sequence ID" value="SPCC18.15.1:pep"/>
    <property type="gene ID" value="SPCC18.15"/>
</dbReference>
<dbReference type="GeneID" id="2539212"/>
<dbReference type="KEGG" id="spo:2539212"/>
<dbReference type="PomBase" id="SPCC18.15"/>
<dbReference type="VEuPathDB" id="FungiDB:SPCC18.15"/>
<dbReference type="eggNOG" id="KOG0280">
    <property type="taxonomic scope" value="Eukaryota"/>
</dbReference>
<dbReference type="HOGENOM" id="CLU_036100_0_0_1"/>
<dbReference type="InParanoid" id="O74865"/>
<dbReference type="OMA" id="LDMKWLP"/>
<dbReference type="UniPathway" id="UPA00559"/>
<dbReference type="PRO" id="PR:O74865"/>
<dbReference type="Proteomes" id="UP000002485">
    <property type="component" value="Chromosome III"/>
</dbReference>
<dbReference type="GO" id="GO:0005737">
    <property type="term" value="C:cytoplasm"/>
    <property type="evidence" value="ECO:0000318"/>
    <property type="project" value="GO_Central"/>
</dbReference>
<dbReference type="GO" id="GO:0005829">
    <property type="term" value="C:cytosol"/>
    <property type="evidence" value="ECO:0007005"/>
    <property type="project" value="PomBase"/>
</dbReference>
<dbReference type="GO" id="GO:0005634">
    <property type="term" value="C:nucleus"/>
    <property type="evidence" value="ECO:0007005"/>
    <property type="project" value="PomBase"/>
</dbReference>
<dbReference type="GO" id="GO:0061685">
    <property type="term" value="F:diphthine methylesterase activity"/>
    <property type="evidence" value="ECO:0000318"/>
    <property type="project" value="GO_Central"/>
</dbReference>
<dbReference type="GO" id="GO:0032456">
    <property type="term" value="P:endocytic recycling"/>
    <property type="evidence" value="ECO:0000266"/>
    <property type="project" value="PomBase"/>
</dbReference>
<dbReference type="GO" id="GO:0017183">
    <property type="term" value="P:protein histidyl modification to diphthamide"/>
    <property type="evidence" value="ECO:0000318"/>
    <property type="project" value="GO_Central"/>
</dbReference>
<dbReference type="Gene3D" id="2.130.10.10">
    <property type="entry name" value="YVTN repeat-like/Quinoprotein amine dehydrogenase"/>
    <property type="match status" value="1"/>
</dbReference>
<dbReference type="InterPro" id="IPR024977">
    <property type="entry name" value="Apc4-like_WD40_dom"/>
</dbReference>
<dbReference type="InterPro" id="IPR052415">
    <property type="entry name" value="Diphthine_MTase"/>
</dbReference>
<dbReference type="InterPro" id="IPR015943">
    <property type="entry name" value="WD40/YVTN_repeat-like_dom_sf"/>
</dbReference>
<dbReference type="InterPro" id="IPR036322">
    <property type="entry name" value="WD40_repeat_dom_sf"/>
</dbReference>
<dbReference type="InterPro" id="IPR001680">
    <property type="entry name" value="WD40_rpt"/>
</dbReference>
<dbReference type="PANTHER" id="PTHR46042">
    <property type="entry name" value="DIPHTHINE METHYLTRANSFERASE"/>
    <property type="match status" value="1"/>
</dbReference>
<dbReference type="PANTHER" id="PTHR46042:SF1">
    <property type="entry name" value="DIPHTHINE METHYLTRANSFERASE"/>
    <property type="match status" value="1"/>
</dbReference>
<dbReference type="Pfam" id="PF12894">
    <property type="entry name" value="ANAPC4_WD40"/>
    <property type="match status" value="1"/>
</dbReference>
<dbReference type="Pfam" id="PF00400">
    <property type="entry name" value="WD40"/>
    <property type="match status" value="1"/>
</dbReference>
<dbReference type="SMART" id="SM00320">
    <property type="entry name" value="WD40"/>
    <property type="match status" value="4"/>
</dbReference>
<dbReference type="SUPFAM" id="SSF50978">
    <property type="entry name" value="WD40 repeat-like"/>
    <property type="match status" value="1"/>
</dbReference>
<protein>
    <recommendedName>
        <fullName>Diphthine methyltransferase</fullName>
        <ecNumber>3.1.1.97</ecNumber>
    </recommendedName>
    <alternativeName>
        <fullName>Diphthamide biosynthesis protein 7</fullName>
    </alternativeName>
    <alternativeName>
        <fullName>WD repeat-containing protein rrt2</fullName>
    </alternativeName>
</protein>
<accession>O74865</accession>
<organism>
    <name type="scientific">Schizosaccharomyces pombe (strain 972 / ATCC 24843)</name>
    <name type="common">Fission yeast</name>
    <dbReference type="NCBI Taxonomy" id="284812"/>
    <lineage>
        <taxon>Eukaryota</taxon>
        <taxon>Fungi</taxon>
        <taxon>Dikarya</taxon>
        <taxon>Ascomycota</taxon>
        <taxon>Taphrinomycotina</taxon>
        <taxon>Schizosaccharomycetes</taxon>
        <taxon>Schizosaccharomycetales</taxon>
        <taxon>Schizosaccharomycetaceae</taxon>
        <taxon>Schizosaccharomyces</taxon>
    </lineage>
</organism>